<organism>
    <name type="scientific">Idiomarina loihiensis (strain ATCC BAA-735 / DSM 15497 / L2-TR)</name>
    <dbReference type="NCBI Taxonomy" id="283942"/>
    <lineage>
        <taxon>Bacteria</taxon>
        <taxon>Pseudomonadati</taxon>
        <taxon>Pseudomonadota</taxon>
        <taxon>Gammaproteobacteria</taxon>
        <taxon>Alteromonadales</taxon>
        <taxon>Idiomarinaceae</taxon>
        <taxon>Idiomarina</taxon>
    </lineage>
</organism>
<comment type="function">
    <text evidence="1">Binds to the 23S rRNA.</text>
</comment>
<comment type="subunit">
    <text evidence="1">Part of the 50S ribosomal subunit.</text>
</comment>
<comment type="similarity">
    <text evidence="1">Belongs to the universal ribosomal protein uL15 family.</text>
</comment>
<dbReference type="EMBL" id="AE017340">
    <property type="protein sequence ID" value="AAV82729.1"/>
    <property type="molecule type" value="Genomic_DNA"/>
</dbReference>
<dbReference type="RefSeq" id="WP_011235128.1">
    <property type="nucleotide sequence ID" value="NC_006512.1"/>
</dbReference>
<dbReference type="SMR" id="Q5QXW4"/>
<dbReference type="STRING" id="283942.IL1897"/>
<dbReference type="GeneID" id="41337086"/>
<dbReference type="KEGG" id="ilo:IL1897"/>
<dbReference type="eggNOG" id="COG0200">
    <property type="taxonomic scope" value="Bacteria"/>
</dbReference>
<dbReference type="HOGENOM" id="CLU_055188_4_2_6"/>
<dbReference type="OrthoDB" id="9810293at2"/>
<dbReference type="Proteomes" id="UP000001171">
    <property type="component" value="Chromosome"/>
</dbReference>
<dbReference type="GO" id="GO:0022625">
    <property type="term" value="C:cytosolic large ribosomal subunit"/>
    <property type="evidence" value="ECO:0007669"/>
    <property type="project" value="TreeGrafter"/>
</dbReference>
<dbReference type="GO" id="GO:0019843">
    <property type="term" value="F:rRNA binding"/>
    <property type="evidence" value="ECO:0007669"/>
    <property type="project" value="UniProtKB-UniRule"/>
</dbReference>
<dbReference type="GO" id="GO:0003735">
    <property type="term" value="F:structural constituent of ribosome"/>
    <property type="evidence" value="ECO:0007669"/>
    <property type="project" value="InterPro"/>
</dbReference>
<dbReference type="GO" id="GO:0006412">
    <property type="term" value="P:translation"/>
    <property type="evidence" value="ECO:0007669"/>
    <property type="project" value="UniProtKB-UniRule"/>
</dbReference>
<dbReference type="Gene3D" id="3.100.10.10">
    <property type="match status" value="1"/>
</dbReference>
<dbReference type="HAMAP" id="MF_01341">
    <property type="entry name" value="Ribosomal_uL15"/>
    <property type="match status" value="1"/>
</dbReference>
<dbReference type="InterPro" id="IPR030878">
    <property type="entry name" value="Ribosomal_uL15"/>
</dbReference>
<dbReference type="InterPro" id="IPR021131">
    <property type="entry name" value="Ribosomal_uL15/eL18"/>
</dbReference>
<dbReference type="InterPro" id="IPR036227">
    <property type="entry name" value="Ribosomal_uL15/eL18_sf"/>
</dbReference>
<dbReference type="InterPro" id="IPR005749">
    <property type="entry name" value="Ribosomal_uL15_bac-type"/>
</dbReference>
<dbReference type="NCBIfam" id="TIGR01071">
    <property type="entry name" value="rplO_bact"/>
    <property type="match status" value="1"/>
</dbReference>
<dbReference type="PANTHER" id="PTHR12934">
    <property type="entry name" value="50S RIBOSOMAL PROTEIN L15"/>
    <property type="match status" value="1"/>
</dbReference>
<dbReference type="PANTHER" id="PTHR12934:SF11">
    <property type="entry name" value="LARGE RIBOSOMAL SUBUNIT PROTEIN UL15M"/>
    <property type="match status" value="1"/>
</dbReference>
<dbReference type="Pfam" id="PF00828">
    <property type="entry name" value="Ribosomal_L27A"/>
    <property type="match status" value="1"/>
</dbReference>
<dbReference type="SUPFAM" id="SSF52080">
    <property type="entry name" value="Ribosomal proteins L15p and L18e"/>
    <property type="match status" value="1"/>
</dbReference>
<keyword id="KW-1185">Reference proteome</keyword>
<keyword id="KW-0687">Ribonucleoprotein</keyword>
<keyword id="KW-0689">Ribosomal protein</keyword>
<keyword id="KW-0694">RNA-binding</keyword>
<keyword id="KW-0699">rRNA-binding</keyword>
<reference key="1">
    <citation type="journal article" date="2004" name="Proc. Natl. Acad. Sci. U.S.A.">
        <title>Genome sequence of the deep-sea gamma-proteobacterium Idiomarina loihiensis reveals amino acid fermentation as a source of carbon and energy.</title>
        <authorList>
            <person name="Hou S."/>
            <person name="Saw J.H."/>
            <person name="Lee K.S."/>
            <person name="Freitas T.A."/>
            <person name="Belisle C."/>
            <person name="Kawarabayasi Y."/>
            <person name="Donachie S.P."/>
            <person name="Pikina A."/>
            <person name="Galperin M.Y."/>
            <person name="Koonin E.V."/>
            <person name="Makarova K.S."/>
            <person name="Omelchenko M.V."/>
            <person name="Sorokin A."/>
            <person name="Wolf Y.I."/>
            <person name="Li Q.X."/>
            <person name="Keum Y.S."/>
            <person name="Campbell S."/>
            <person name="Denery J."/>
            <person name="Aizawa S."/>
            <person name="Shibata S."/>
            <person name="Malahoff A."/>
            <person name="Alam M."/>
        </authorList>
    </citation>
    <scope>NUCLEOTIDE SEQUENCE [LARGE SCALE GENOMIC DNA]</scope>
    <source>
        <strain>ATCC BAA-735 / DSM 15497 / L2-TR</strain>
    </source>
</reference>
<proteinExistence type="inferred from homology"/>
<sequence>MELNTLAPAPGAKSSKKRVGRGIGSGLGKTGGRGHKGQKSRSGGSVKPGFEGGQMPIQRRLPKFGFTSRKAMVTAEVNLAEIAKVDGDTVELATLKAAGLVRKNVLHAKVIKSGELSRAVTVKGLKVTKGAREAIEAAGGKIEG</sequence>
<evidence type="ECO:0000255" key="1">
    <source>
        <dbReference type="HAMAP-Rule" id="MF_01341"/>
    </source>
</evidence>
<evidence type="ECO:0000256" key="2">
    <source>
        <dbReference type="SAM" id="MobiDB-lite"/>
    </source>
</evidence>
<evidence type="ECO:0000305" key="3"/>
<gene>
    <name evidence="1" type="primary">rplO</name>
    <name type="ordered locus">IL1897</name>
</gene>
<protein>
    <recommendedName>
        <fullName evidence="1">Large ribosomal subunit protein uL15</fullName>
    </recommendedName>
    <alternativeName>
        <fullName evidence="3">50S ribosomal protein L15</fullName>
    </alternativeName>
</protein>
<accession>Q5QXW4</accession>
<feature type="chain" id="PRO_0000104734" description="Large ribosomal subunit protein uL15">
    <location>
        <begin position="1"/>
        <end position="144"/>
    </location>
</feature>
<feature type="region of interest" description="Disordered" evidence="2">
    <location>
        <begin position="1"/>
        <end position="56"/>
    </location>
</feature>
<feature type="compositionally biased region" description="Gly residues" evidence="2">
    <location>
        <begin position="21"/>
        <end position="31"/>
    </location>
</feature>
<name>RL15_IDILO</name>